<dbReference type="EMBL" id="CP000668">
    <property type="protein sequence ID" value="ABP41990.1"/>
    <property type="molecule type" value="Genomic_DNA"/>
</dbReference>
<dbReference type="RefSeq" id="WP_011906460.1">
    <property type="nucleotide sequence ID" value="NZ_CP009715.1"/>
</dbReference>
<dbReference type="SMR" id="A4TRS8"/>
<dbReference type="GeneID" id="49787619"/>
<dbReference type="KEGG" id="ypp:YPDSF_3640"/>
<dbReference type="PATRIC" id="fig|386656.14.peg.301"/>
<dbReference type="GO" id="GO:0005737">
    <property type="term" value="C:cytoplasm"/>
    <property type="evidence" value="ECO:0007669"/>
    <property type="project" value="UniProtKB-SubCell"/>
</dbReference>
<dbReference type="GO" id="GO:0003700">
    <property type="term" value="F:DNA-binding transcription factor activity"/>
    <property type="evidence" value="ECO:0007669"/>
    <property type="project" value="UniProtKB-UniRule"/>
</dbReference>
<dbReference type="GO" id="GO:0043565">
    <property type="term" value="F:sequence-specific DNA binding"/>
    <property type="evidence" value="ECO:0007669"/>
    <property type="project" value="InterPro"/>
</dbReference>
<dbReference type="GO" id="GO:0045893">
    <property type="term" value="P:positive regulation of DNA-templated transcription"/>
    <property type="evidence" value="ECO:0007669"/>
    <property type="project" value="UniProtKB-UniRule"/>
</dbReference>
<dbReference type="GO" id="GO:0019299">
    <property type="term" value="P:rhamnose metabolic process"/>
    <property type="evidence" value="ECO:0007669"/>
    <property type="project" value="UniProtKB-UniRule"/>
</dbReference>
<dbReference type="CDD" id="cd06977">
    <property type="entry name" value="cupin_RhaR_RhaS-like_N"/>
    <property type="match status" value="1"/>
</dbReference>
<dbReference type="Gene3D" id="1.10.10.60">
    <property type="entry name" value="Homeodomain-like"/>
    <property type="match status" value="1"/>
</dbReference>
<dbReference type="Gene3D" id="2.60.120.10">
    <property type="entry name" value="Jelly Rolls"/>
    <property type="match status" value="1"/>
</dbReference>
<dbReference type="HAMAP" id="MF_01534">
    <property type="entry name" value="HTH_type_RhaS"/>
    <property type="match status" value="1"/>
</dbReference>
<dbReference type="InterPro" id="IPR003313">
    <property type="entry name" value="AraC-bd"/>
</dbReference>
<dbReference type="InterPro" id="IPR050204">
    <property type="entry name" value="AraC_XylS_family_regulators"/>
</dbReference>
<dbReference type="InterPro" id="IPR009057">
    <property type="entry name" value="Homeodomain-like_sf"/>
</dbReference>
<dbReference type="InterPro" id="IPR037923">
    <property type="entry name" value="HTH-like"/>
</dbReference>
<dbReference type="InterPro" id="IPR018060">
    <property type="entry name" value="HTH_AraC"/>
</dbReference>
<dbReference type="InterPro" id="IPR018062">
    <property type="entry name" value="HTH_AraC-typ_CS"/>
</dbReference>
<dbReference type="InterPro" id="IPR047220">
    <property type="entry name" value="RhaR_RhaS-like_N"/>
</dbReference>
<dbReference type="InterPro" id="IPR014710">
    <property type="entry name" value="RmlC-like_jellyroll"/>
</dbReference>
<dbReference type="InterPro" id="IPR020449">
    <property type="entry name" value="Tscrpt_reg_AraC-type_HTH"/>
</dbReference>
<dbReference type="InterPro" id="IPR023609">
    <property type="entry name" value="Tscrpt_reg_HTH_RhaS"/>
</dbReference>
<dbReference type="NCBIfam" id="NF010028">
    <property type="entry name" value="PRK13503.1"/>
    <property type="match status" value="1"/>
</dbReference>
<dbReference type="PANTHER" id="PTHR46796:SF13">
    <property type="entry name" value="HTH-TYPE TRANSCRIPTIONAL ACTIVATOR RHAS"/>
    <property type="match status" value="1"/>
</dbReference>
<dbReference type="PANTHER" id="PTHR46796">
    <property type="entry name" value="HTH-TYPE TRANSCRIPTIONAL ACTIVATOR RHAS-RELATED"/>
    <property type="match status" value="1"/>
</dbReference>
<dbReference type="Pfam" id="PF02311">
    <property type="entry name" value="AraC_binding"/>
    <property type="match status" value="1"/>
</dbReference>
<dbReference type="Pfam" id="PF12833">
    <property type="entry name" value="HTH_18"/>
    <property type="match status" value="1"/>
</dbReference>
<dbReference type="PRINTS" id="PR00032">
    <property type="entry name" value="HTHARAC"/>
</dbReference>
<dbReference type="SMART" id="SM00342">
    <property type="entry name" value="HTH_ARAC"/>
    <property type="match status" value="1"/>
</dbReference>
<dbReference type="SUPFAM" id="SSF46689">
    <property type="entry name" value="Homeodomain-like"/>
    <property type="match status" value="2"/>
</dbReference>
<dbReference type="SUPFAM" id="SSF51215">
    <property type="entry name" value="Regulatory protein AraC"/>
    <property type="match status" value="1"/>
</dbReference>
<dbReference type="PROSITE" id="PS00041">
    <property type="entry name" value="HTH_ARAC_FAMILY_1"/>
    <property type="match status" value="1"/>
</dbReference>
<dbReference type="PROSITE" id="PS01124">
    <property type="entry name" value="HTH_ARAC_FAMILY_2"/>
    <property type="match status" value="1"/>
</dbReference>
<comment type="function">
    <text evidence="1">Activates expression of the rhaBAD and rhaT operons.</text>
</comment>
<comment type="subunit">
    <text evidence="1">Binds DNA as a dimer.</text>
</comment>
<comment type="subcellular location">
    <subcellularLocation>
        <location evidence="1">Cytoplasm</location>
    </subcellularLocation>
</comment>
<protein>
    <recommendedName>
        <fullName evidence="1">HTH-type transcriptional activator RhaS</fullName>
    </recommendedName>
    <alternativeName>
        <fullName evidence="1">L-rhamnose operon regulatory protein RhaS</fullName>
    </alternativeName>
</protein>
<keyword id="KW-0010">Activator</keyword>
<keyword id="KW-0963">Cytoplasm</keyword>
<keyword id="KW-0238">DNA-binding</keyword>
<keyword id="KW-0677">Repeat</keyword>
<keyword id="KW-0684">Rhamnose metabolism</keyword>
<keyword id="KW-0804">Transcription</keyword>
<keyword id="KW-0805">Transcription regulation</keyword>
<evidence type="ECO:0000255" key="1">
    <source>
        <dbReference type="HAMAP-Rule" id="MF_01534"/>
    </source>
</evidence>
<feature type="chain" id="PRO_1000068714" description="HTH-type transcriptional activator RhaS">
    <location>
        <begin position="1"/>
        <end position="273"/>
    </location>
</feature>
<feature type="domain" description="HTH araC/xylS-type" evidence="1">
    <location>
        <begin position="174"/>
        <end position="272"/>
    </location>
</feature>
<feature type="DNA-binding region" description="H-T-H motif" evidence="1">
    <location>
        <begin position="191"/>
        <end position="212"/>
    </location>
</feature>
<feature type="DNA-binding region" description="H-T-H motif" evidence="1">
    <location>
        <begin position="239"/>
        <end position="262"/>
    </location>
</feature>
<feature type="site" description="Interaction with sigma-70" evidence="1">
    <location>
        <position position="241"/>
    </location>
</feature>
<feature type="site" description="Interaction with sigma-70" evidence="1">
    <location>
        <position position="250"/>
    </location>
</feature>
<gene>
    <name evidence="1" type="primary">rhaS</name>
    <name type="ordered locus">YPDSF_3640</name>
</gene>
<organism>
    <name type="scientific">Yersinia pestis (strain Pestoides F)</name>
    <dbReference type="NCBI Taxonomy" id="386656"/>
    <lineage>
        <taxon>Bacteria</taxon>
        <taxon>Pseudomonadati</taxon>
        <taxon>Pseudomonadota</taxon>
        <taxon>Gammaproteobacteria</taxon>
        <taxon>Enterobacterales</taxon>
        <taxon>Yersiniaceae</taxon>
        <taxon>Yersinia</taxon>
    </lineage>
</organism>
<reference key="1">
    <citation type="submission" date="2007-02" db="EMBL/GenBank/DDBJ databases">
        <title>Complete sequence of chromosome of Yersinia pestis Pestoides F.</title>
        <authorList>
            <consortium name="US DOE Joint Genome Institute"/>
            <person name="Copeland A."/>
            <person name="Lucas S."/>
            <person name="Lapidus A."/>
            <person name="Barry K."/>
            <person name="Detter J.C."/>
            <person name="Glavina del Rio T."/>
            <person name="Hammon N."/>
            <person name="Israni S."/>
            <person name="Dalin E."/>
            <person name="Tice H."/>
            <person name="Pitluck S."/>
            <person name="Di Bartolo G."/>
            <person name="Chain P."/>
            <person name="Malfatti S."/>
            <person name="Shin M."/>
            <person name="Vergez L."/>
            <person name="Schmutz J."/>
            <person name="Larimer F."/>
            <person name="Land M."/>
            <person name="Hauser L."/>
            <person name="Worsham P."/>
            <person name="Chu M."/>
            <person name="Bearden S."/>
            <person name="Garcia E."/>
            <person name="Richardson P."/>
        </authorList>
    </citation>
    <scope>NUCLEOTIDE SEQUENCE [LARGE SCALE GENOMIC DNA]</scope>
    <source>
        <strain>Pestoides F</strain>
    </source>
</reference>
<accession>A4TRS8</accession>
<proteinExistence type="inferred from homology"/>
<name>RHAS_YERPP</name>
<sequence>MTVLHSIDFFSSSSAPVAIEARAPQSAFPEHHHDFYEIVIVEEGAGVHVFNGNPYTLSRGCVCFVRDHDRHLFESTDDLFLTNVLFRAPDAFRFLSGVGHFLPRECDGVYPSHWRVNGQVLQQIKCLIACLEHAPKSDQVEDIALHESVFMQLLVKLWQGCQTQAGDDQEGRLYQLLDWLQNNYSEAVEWPELADRFALPLRTLHRQLKNKTGMTPQRYLTRLRLLQARHQLCYSDNSVTDIAYLCGFGDSNHFSTLFKREFSQSPRDLRSQL</sequence>